<comment type="function">
    <text evidence="1">Plays an essential role in the initiation and regulation of chromosomal replication. ATP-DnaA binds to the origin of replication (oriC) to initiate formation of the DNA replication initiation complex once per cell cycle. Binds the DnaA box (a 9 base pair repeat at the origin) and separates the double-stranded (ds)DNA. Forms a right-handed helical filament on oriC DNA; dsDNA binds to the exterior of the filament while single-stranded (ss)DNA is stabiized in the filament's interior. The ATP-DnaA-oriC complex binds and stabilizes one strand of the AT-rich DNA unwinding element (DUE), permitting loading of DNA polymerase. After initiation quickly degrades to an ADP-DnaA complex that is not apt for DNA replication. Binds acidic phospholipids.</text>
</comment>
<comment type="subunit">
    <text evidence="1">Oligomerizes as a right-handed, spiral filament on DNA at oriC.</text>
</comment>
<comment type="subcellular location">
    <subcellularLocation>
        <location evidence="1">Cytoplasm</location>
    </subcellularLocation>
</comment>
<comment type="domain">
    <text evidence="1">Domain I is involved in oligomerization and binding regulators, domain II is flexibile and of varying length in different bacteria, domain III forms the AAA+ region, while domain IV binds dsDNA.</text>
</comment>
<comment type="similarity">
    <text evidence="1">Belongs to the DnaA family.</text>
</comment>
<protein>
    <recommendedName>
        <fullName evidence="1">Chromosomal replication initiator protein DnaA</fullName>
    </recommendedName>
</protein>
<keyword id="KW-0067">ATP-binding</keyword>
<keyword id="KW-0963">Cytoplasm</keyword>
<keyword id="KW-0235">DNA replication</keyword>
<keyword id="KW-0238">DNA-binding</keyword>
<keyword id="KW-0446">Lipid-binding</keyword>
<keyword id="KW-0547">Nucleotide-binding</keyword>
<keyword id="KW-1185">Reference proteome</keyword>
<reference key="1">
    <citation type="journal article" date="2009" name="Proc. Natl. Acad. Sci. U.S.A.">
        <title>The genomic basis of trophic strategy in marine bacteria.</title>
        <authorList>
            <person name="Lauro F.M."/>
            <person name="McDougald D."/>
            <person name="Thomas T."/>
            <person name="Williams T.J."/>
            <person name="Egan S."/>
            <person name="Rice S."/>
            <person name="DeMaere M.Z."/>
            <person name="Ting L."/>
            <person name="Ertan H."/>
            <person name="Johnson J."/>
            <person name="Ferriera S."/>
            <person name="Lapidus A."/>
            <person name="Anderson I."/>
            <person name="Kyrpides N."/>
            <person name="Munk A.C."/>
            <person name="Detter C."/>
            <person name="Han C.S."/>
            <person name="Brown M.V."/>
            <person name="Robb F.T."/>
            <person name="Kjelleberg S."/>
            <person name="Cavicchioli R."/>
        </authorList>
    </citation>
    <scope>NUCLEOTIDE SEQUENCE [LARGE SCALE GENOMIC DNA]</scope>
    <source>
        <strain>DSM 13593 / LMG 18877 / RB2256</strain>
    </source>
</reference>
<gene>
    <name evidence="1" type="primary">dnaA</name>
    <name type="ordered locus">Sala_0001</name>
</gene>
<feature type="chain" id="PRO_1000079965" description="Chromosomal replication initiator protein DnaA">
    <location>
        <begin position="1"/>
        <end position="453"/>
    </location>
</feature>
<feature type="region of interest" description="Domain I, interacts with DnaA modulators" evidence="1">
    <location>
        <begin position="1"/>
        <end position="76"/>
    </location>
</feature>
<feature type="region of interest" description="Domain II" evidence="1">
    <location>
        <begin position="76"/>
        <end position="115"/>
    </location>
</feature>
<feature type="region of interest" description="Domain III, AAA+ region" evidence="1">
    <location>
        <begin position="116"/>
        <end position="333"/>
    </location>
</feature>
<feature type="region of interest" description="Domain IV, binds dsDNA" evidence="1">
    <location>
        <begin position="334"/>
        <end position="453"/>
    </location>
</feature>
<feature type="binding site" evidence="1">
    <location>
        <position position="160"/>
    </location>
    <ligand>
        <name>ATP</name>
        <dbReference type="ChEBI" id="CHEBI:30616"/>
    </ligand>
</feature>
<feature type="binding site" evidence="1">
    <location>
        <position position="162"/>
    </location>
    <ligand>
        <name>ATP</name>
        <dbReference type="ChEBI" id="CHEBI:30616"/>
    </ligand>
</feature>
<feature type="binding site" evidence="1">
    <location>
        <position position="163"/>
    </location>
    <ligand>
        <name>ATP</name>
        <dbReference type="ChEBI" id="CHEBI:30616"/>
    </ligand>
</feature>
<feature type="binding site" evidence="1">
    <location>
        <position position="164"/>
    </location>
    <ligand>
        <name>ATP</name>
        <dbReference type="ChEBI" id="CHEBI:30616"/>
    </ligand>
</feature>
<proteinExistence type="inferred from homology"/>
<name>DNAA_SPHAL</name>
<organism>
    <name type="scientific">Sphingopyxis alaskensis (strain DSM 13593 / LMG 18877 / RB2256)</name>
    <name type="common">Sphingomonas alaskensis</name>
    <dbReference type="NCBI Taxonomy" id="317655"/>
    <lineage>
        <taxon>Bacteria</taxon>
        <taxon>Pseudomonadati</taxon>
        <taxon>Pseudomonadota</taxon>
        <taxon>Alphaproteobacteria</taxon>
        <taxon>Sphingomonadales</taxon>
        <taxon>Sphingomonadaceae</taxon>
        <taxon>Sphingopyxis</taxon>
    </lineage>
</organism>
<evidence type="ECO:0000255" key="1">
    <source>
        <dbReference type="HAMAP-Rule" id="MF_00377"/>
    </source>
</evidence>
<dbReference type="EMBL" id="CP000356">
    <property type="protein sequence ID" value="ABF51727.1"/>
    <property type="molecule type" value="Genomic_DNA"/>
</dbReference>
<dbReference type="RefSeq" id="WP_011540342.1">
    <property type="nucleotide sequence ID" value="NC_008048.1"/>
</dbReference>
<dbReference type="SMR" id="Q1GN68"/>
<dbReference type="STRING" id="317655.Sala_0001"/>
<dbReference type="KEGG" id="sal:Sala_0001"/>
<dbReference type="eggNOG" id="COG0593">
    <property type="taxonomic scope" value="Bacteria"/>
</dbReference>
<dbReference type="HOGENOM" id="CLU_026910_3_0_5"/>
<dbReference type="Proteomes" id="UP000006578">
    <property type="component" value="Chromosome"/>
</dbReference>
<dbReference type="GO" id="GO:0005737">
    <property type="term" value="C:cytoplasm"/>
    <property type="evidence" value="ECO:0007669"/>
    <property type="project" value="UniProtKB-SubCell"/>
</dbReference>
<dbReference type="GO" id="GO:0005886">
    <property type="term" value="C:plasma membrane"/>
    <property type="evidence" value="ECO:0007669"/>
    <property type="project" value="TreeGrafter"/>
</dbReference>
<dbReference type="GO" id="GO:0005524">
    <property type="term" value="F:ATP binding"/>
    <property type="evidence" value="ECO:0007669"/>
    <property type="project" value="UniProtKB-UniRule"/>
</dbReference>
<dbReference type="GO" id="GO:0016887">
    <property type="term" value="F:ATP hydrolysis activity"/>
    <property type="evidence" value="ECO:0007669"/>
    <property type="project" value="InterPro"/>
</dbReference>
<dbReference type="GO" id="GO:0003688">
    <property type="term" value="F:DNA replication origin binding"/>
    <property type="evidence" value="ECO:0007669"/>
    <property type="project" value="UniProtKB-UniRule"/>
</dbReference>
<dbReference type="GO" id="GO:0008289">
    <property type="term" value="F:lipid binding"/>
    <property type="evidence" value="ECO:0007669"/>
    <property type="project" value="UniProtKB-KW"/>
</dbReference>
<dbReference type="GO" id="GO:0006270">
    <property type="term" value="P:DNA replication initiation"/>
    <property type="evidence" value="ECO:0007669"/>
    <property type="project" value="UniProtKB-UniRule"/>
</dbReference>
<dbReference type="GO" id="GO:0006275">
    <property type="term" value="P:regulation of DNA replication"/>
    <property type="evidence" value="ECO:0007669"/>
    <property type="project" value="UniProtKB-UniRule"/>
</dbReference>
<dbReference type="CDD" id="cd06571">
    <property type="entry name" value="Bac_DnaA_C"/>
    <property type="match status" value="1"/>
</dbReference>
<dbReference type="Gene3D" id="1.10.1750.10">
    <property type="match status" value="1"/>
</dbReference>
<dbReference type="Gene3D" id="1.10.8.60">
    <property type="match status" value="1"/>
</dbReference>
<dbReference type="Gene3D" id="3.30.300.180">
    <property type="match status" value="1"/>
</dbReference>
<dbReference type="Gene3D" id="3.40.50.300">
    <property type="entry name" value="P-loop containing nucleotide triphosphate hydrolases"/>
    <property type="match status" value="1"/>
</dbReference>
<dbReference type="HAMAP" id="MF_00377">
    <property type="entry name" value="DnaA_bact"/>
    <property type="match status" value="1"/>
</dbReference>
<dbReference type="InterPro" id="IPR003593">
    <property type="entry name" value="AAA+_ATPase"/>
</dbReference>
<dbReference type="InterPro" id="IPR001957">
    <property type="entry name" value="Chromosome_initiator_DnaA"/>
</dbReference>
<dbReference type="InterPro" id="IPR020591">
    <property type="entry name" value="Chromosome_initiator_DnaA-like"/>
</dbReference>
<dbReference type="InterPro" id="IPR018312">
    <property type="entry name" value="Chromosome_initiator_DnaA_CS"/>
</dbReference>
<dbReference type="InterPro" id="IPR013159">
    <property type="entry name" value="DnaA_C"/>
</dbReference>
<dbReference type="InterPro" id="IPR013317">
    <property type="entry name" value="DnaA_dom"/>
</dbReference>
<dbReference type="InterPro" id="IPR024633">
    <property type="entry name" value="DnaA_N_dom"/>
</dbReference>
<dbReference type="InterPro" id="IPR038454">
    <property type="entry name" value="DnaA_N_sf"/>
</dbReference>
<dbReference type="InterPro" id="IPR027417">
    <property type="entry name" value="P-loop_NTPase"/>
</dbReference>
<dbReference type="InterPro" id="IPR010921">
    <property type="entry name" value="Trp_repressor/repl_initiator"/>
</dbReference>
<dbReference type="NCBIfam" id="TIGR00362">
    <property type="entry name" value="DnaA"/>
    <property type="match status" value="1"/>
</dbReference>
<dbReference type="PANTHER" id="PTHR30050">
    <property type="entry name" value="CHROMOSOMAL REPLICATION INITIATOR PROTEIN DNAA"/>
    <property type="match status" value="1"/>
</dbReference>
<dbReference type="PANTHER" id="PTHR30050:SF2">
    <property type="entry name" value="CHROMOSOMAL REPLICATION INITIATOR PROTEIN DNAA"/>
    <property type="match status" value="1"/>
</dbReference>
<dbReference type="Pfam" id="PF00308">
    <property type="entry name" value="Bac_DnaA"/>
    <property type="match status" value="1"/>
</dbReference>
<dbReference type="Pfam" id="PF08299">
    <property type="entry name" value="Bac_DnaA_C"/>
    <property type="match status" value="1"/>
</dbReference>
<dbReference type="Pfam" id="PF11638">
    <property type="entry name" value="DnaA_N"/>
    <property type="match status" value="1"/>
</dbReference>
<dbReference type="PRINTS" id="PR00051">
    <property type="entry name" value="DNAA"/>
</dbReference>
<dbReference type="SMART" id="SM00382">
    <property type="entry name" value="AAA"/>
    <property type="match status" value="1"/>
</dbReference>
<dbReference type="SMART" id="SM00760">
    <property type="entry name" value="Bac_DnaA_C"/>
    <property type="match status" value="1"/>
</dbReference>
<dbReference type="SUPFAM" id="SSF52540">
    <property type="entry name" value="P-loop containing nucleoside triphosphate hydrolases"/>
    <property type="match status" value="1"/>
</dbReference>
<dbReference type="SUPFAM" id="SSF48295">
    <property type="entry name" value="TrpR-like"/>
    <property type="match status" value="1"/>
</dbReference>
<dbReference type="PROSITE" id="PS01008">
    <property type="entry name" value="DNAA"/>
    <property type="match status" value="1"/>
</dbReference>
<sequence length="453" mass="50094">MSGDAAALWPRVAEGLRRDLGARTFDHWLKPVRFADYCALSGVVTLETASRFSANWINERFGDRLELAWRQQLPAVRSVSVRGGVAATERAATLASVPLPTFDAPAAPAANPALLGFDPRLSFDRFVVARSNILAANAARRMAMVERPQFNPLYLCSGTGQGKTHLLQAIAQDYAAAHPTATIILMSAEKFMLEFVGAMRGGDMMAFKARLRAADLLLLDDLQFVIGKNSTQEELLHTIDDLMTAGKRLVVTADRPPAMLDGVEARLLSRLSGGLVADIEAPEDDLRERIIRQRLAAMPMVEVPDDVIAWLVKHFTRNIRELEGALNKLLAYAALTGARIDLMLAEDRLAENVRSARPRITIDEIQRAVCAHYRLDRSDMSSKRRVRAVARPRQVAMYLAKELTPRSYPEIGRRFGGRDHSTVIHAVRTVEALRVADSELDAEIAAIRRSLNS</sequence>
<accession>Q1GN68</accession>